<feature type="chain" id="PRO_1000053581" description="Protein GrpE">
    <location>
        <begin position="1"/>
        <end position="195"/>
    </location>
</feature>
<proteinExistence type="inferred from homology"/>
<gene>
    <name evidence="1" type="primary">grpE</name>
    <name type="ordered locus">FTL_1190</name>
</gene>
<protein>
    <recommendedName>
        <fullName evidence="1">Protein GrpE</fullName>
    </recommendedName>
    <alternativeName>
        <fullName evidence="1">HSP-70 cofactor</fullName>
    </alternativeName>
</protein>
<sequence length="195" mass="22036">MSKQEKSNVEDKSLDIETAAQVETAQESASGALEELSVEEQLERAKDTIKELEDSCDQFKDEALRAKAEMENIRKRAERDVSNARKFGIEKFAKELLPVIDSIEQALKHEVKLEEAIAMKEGIELTAKMLVDILKKNGVEELDPKGEKFDPNLHEAMAMIPNPEFEDNTIFDVFQKGYMLNGRIVRAAKVVIVKN</sequence>
<comment type="function">
    <text evidence="1">Participates actively in the response to hyperosmotic and heat shock by preventing the aggregation of stress-denatured proteins, in association with DnaK and GrpE. It is the nucleotide exchange factor for DnaK and may function as a thermosensor. Unfolded proteins bind initially to DnaJ; upon interaction with the DnaJ-bound protein, DnaK hydrolyzes its bound ATP, resulting in the formation of a stable complex. GrpE releases ADP from DnaK; ATP binding to DnaK triggers the release of the substrate protein, thus completing the reaction cycle. Several rounds of ATP-dependent interactions between DnaJ, DnaK and GrpE are required for fully efficient folding.</text>
</comment>
<comment type="subunit">
    <text evidence="1">Homodimer.</text>
</comment>
<comment type="subcellular location">
    <subcellularLocation>
        <location evidence="1">Cytoplasm</location>
    </subcellularLocation>
</comment>
<comment type="similarity">
    <text evidence="1">Belongs to the GrpE family.</text>
</comment>
<accession>Q2A329</accession>
<dbReference type="EMBL" id="AM233362">
    <property type="protein sequence ID" value="CAJ79629.1"/>
    <property type="molecule type" value="Genomic_DNA"/>
</dbReference>
<dbReference type="RefSeq" id="WP_003037086.1">
    <property type="nucleotide sequence ID" value="NZ_CP009694.1"/>
</dbReference>
<dbReference type="SMR" id="Q2A329"/>
<dbReference type="GeneID" id="75264983"/>
<dbReference type="KEGG" id="ftl:FTL_1190"/>
<dbReference type="Proteomes" id="UP000001944">
    <property type="component" value="Chromosome"/>
</dbReference>
<dbReference type="GO" id="GO:0005829">
    <property type="term" value="C:cytosol"/>
    <property type="evidence" value="ECO:0007669"/>
    <property type="project" value="TreeGrafter"/>
</dbReference>
<dbReference type="GO" id="GO:0000774">
    <property type="term" value="F:adenyl-nucleotide exchange factor activity"/>
    <property type="evidence" value="ECO:0007669"/>
    <property type="project" value="InterPro"/>
</dbReference>
<dbReference type="GO" id="GO:0042803">
    <property type="term" value="F:protein homodimerization activity"/>
    <property type="evidence" value="ECO:0007669"/>
    <property type="project" value="InterPro"/>
</dbReference>
<dbReference type="GO" id="GO:0051087">
    <property type="term" value="F:protein-folding chaperone binding"/>
    <property type="evidence" value="ECO:0007669"/>
    <property type="project" value="InterPro"/>
</dbReference>
<dbReference type="GO" id="GO:0051082">
    <property type="term" value="F:unfolded protein binding"/>
    <property type="evidence" value="ECO:0007669"/>
    <property type="project" value="TreeGrafter"/>
</dbReference>
<dbReference type="GO" id="GO:0006457">
    <property type="term" value="P:protein folding"/>
    <property type="evidence" value="ECO:0007669"/>
    <property type="project" value="InterPro"/>
</dbReference>
<dbReference type="CDD" id="cd00446">
    <property type="entry name" value="GrpE"/>
    <property type="match status" value="1"/>
</dbReference>
<dbReference type="FunFam" id="2.30.22.10:FF:000001">
    <property type="entry name" value="Protein GrpE"/>
    <property type="match status" value="1"/>
</dbReference>
<dbReference type="Gene3D" id="3.90.20.20">
    <property type="match status" value="1"/>
</dbReference>
<dbReference type="Gene3D" id="2.30.22.10">
    <property type="entry name" value="Head domain of nucleotide exchange factor GrpE"/>
    <property type="match status" value="1"/>
</dbReference>
<dbReference type="HAMAP" id="MF_01151">
    <property type="entry name" value="GrpE"/>
    <property type="match status" value="1"/>
</dbReference>
<dbReference type="InterPro" id="IPR000740">
    <property type="entry name" value="GrpE"/>
</dbReference>
<dbReference type="InterPro" id="IPR013805">
    <property type="entry name" value="GrpE_coiled_coil"/>
</dbReference>
<dbReference type="InterPro" id="IPR009012">
    <property type="entry name" value="GrpE_head"/>
</dbReference>
<dbReference type="NCBIfam" id="NF010737">
    <property type="entry name" value="PRK14139.1"/>
    <property type="match status" value="1"/>
</dbReference>
<dbReference type="NCBIfam" id="NF010738">
    <property type="entry name" value="PRK14140.1"/>
    <property type="match status" value="1"/>
</dbReference>
<dbReference type="NCBIfam" id="NF010746">
    <property type="entry name" value="PRK14148.1"/>
    <property type="match status" value="1"/>
</dbReference>
<dbReference type="NCBIfam" id="NF010748">
    <property type="entry name" value="PRK14150.1"/>
    <property type="match status" value="1"/>
</dbReference>
<dbReference type="PANTHER" id="PTHR21237">
    <property type="entry name" value="GRPE PROTEIN"/>
    <property type="match status" value="1"/>
</dbReference>
<dbReference type="PANTHER" id="PTHR21237:SF23">
    <property type="entry name" value="GRPE PROTEIN HOMOLOG, MITOCHONDRIAL"/>
    <property type="match status" value="1"/>
</dbReference>
<dbReference type="Pfam" id="PF01025">
    <property type="entry name" value="GrpE"/>
    <property type="match status" value="1"/>
</dbReference>
<dbReference type="PRINTS" id="PR00773">
    <property type="entry name" value="GRPEPROTEIN"/>
</dbReference>
<dbReference type="SUPFAM" id="SSF58014">
    <property type="entry name" value="Coiled-coil domain of nucleotide exchange factor GrpE"/>
    <property type="match status" value="1"/>
</dbReference>
<dbReference type="SUPFAM" id="SSF51064">
    <property type="entry name" value="Head domain of nucleotide exchange factor GrpE"/>
    <property type="match status" value="1"/>
</dbReference>
<dbReference type="PROSITE" id="PS01071">
    <property type="entry name" value="GRPE"/>
    <property type="match status" value="1"/>
</dbReference>
<organism>
    <name type="scientific">Francisella tularensis subsp. holarctica (strain LVS)</name>
    <dbReference type="NCBI Taxonomy" id="376619"/>
    <lineage>
        <taxon>Bacteria</taxon>
        <taxon>Pseudomonadati</taxon>
        <taxon>Pseudomonadota</taxon>
        <taxon>Gammaproteobacteria</taxon>
        <taxon>Thiotrichales</taxon>
        <taxon>Francisellaceae</taxon>
        <taxon>Francisella</taxon>
    </lineage>
</organism>
<evidence type="ECO:0000255" key="1">
    <source>
        <dbReference type="HAMAP-Rule" id="MF_01151"/>
    </source>
</evidence>
<name>GRPE_FRATH</name>
<keyword id="KW-0143">Chaperone</keyword>
<keyword id="KW-0963">Cytoplasm</keyword>
<keyword id="KW-1185">Reference proteome</keyword>
<keyword id="KW-0346">Stress response</keyword>
<reference key="1">
    <citation type="submission" date="2006-03" db="EMBL/GenBank/DDBJ databases">
        <title>Complete genome sequence of Francisella tularensis LVS (Live Vaccine Strain).</title>
        <authorList>
            <person name="Chain P."/>
            <person name="Larimer F."/>
            <person name="Land M."/>
            <person name="Stilwagen S."/>
            <person name="Larsson P."/>
            <person name="Bearden S."/>
            <person name="Chu M."/>
            <person name="Oyston P."/>
            <person name="Forsman M."/>
            <person name="Andersson S."/>
            <person name="Lindler L."/>
            <person name="Titball R."/>
            <person name="Garcia E."/>
        </authorList>
    </citation>
    <scope>NUCLEOTIDE SEQUENCE [LARGE SCALE GENOMIC DNA]</scope>
    <source>
        <strain>LVS</strain>
    </source>
</reference>